<name>ASPD_METBU</name>
<sequence>MLKIGVFGCGAIGTELCKAIDSGHIEVELYAVYDRHEQSIINLKEQLKNTDPKVLEIVEMVKHVDLVVECASQQAVYDVVPTTLHAKCDVMVISVGAFADKKLLDTTFDIAKEYGCKIYFPSGAIVGLDGLKSASAASIYSVTLTTQKHPRSFEGAPYIVQNNIDLDSIKGKTVLFEGMASEAVKAFPSNVNVAASLSIAGIGFDKTKVKIIANPALTRNIHEITVEGEFGMFTTRVENVPAPSNPKTSYLAALSAISTLKKIADPLQVGT</sequence>
<reference key="1">
    <citation type="journal article" date="2009" name="ISME J.">
        <title>The genome sequence of the psychrophilic archaeon, Methanococcoides burtonii: the role of genome evolution in cold adaptation.</title>
        <authorList>
            <person name="Allen M.A."/>
            <person name="Lauro F.M."/>
            <person name="Williams T.J."/>
            <person name="Burg D."/>
            <person name="Siddiqui K.S."/>
            <person name="De Francisci D."/>
            <person name="Chong K.W."/>
            <person name="Pilak O."/>
            <person name="Chew H.H."/>
            <person name="De Maere M.Z."/>
            <person name="Ting L."/>
            <person name="Katrib M."/>
            <person name="Ng C."/>
            <person name="Sowers K.R."/>
            <person name="Galperin M.Y."/>
            <person name="Anderson I.J."/>
            <person name="Ivanova N."/>
            <person name="Dalin E."/>
            <person name="Martinez M."/>
            <person name="Lapidus A."/>
            <person name="Hauser L."/>
            <person name="Land M."/>
            <person name="Thomas T."/>
            <person name="Cavicchioli R."/>
        </authorList>
    </citation>
    <scope>NUCLEOTIDE SEQUENCE [LARGE SCALE GENOMIC DNA]</scope>
    <source>
        <strain>DSM 6242 / NBRC 107633 / OCM 468 / ACE-M</strain>
    </source>
</reference>
<dbReference type="EC" id="1.4.1.21" evidence="1"/>
<dbReference type="EMBL" id="CP000300">
    <property type="protein sequence ID" value="ABE52575.1"/>
    <property type="molecule type" value="Genomic_DNA"/>
</dbReference>
<dbReference type="RefSeq" id="WP_011499718.1">
    <property type="nucleotide sequence ID" value="NC_007955.1"/>
</dbReference>
<dbReference type="SMR" id="Q12VF1"/>
<dbReference type="STRING" id="259564.Mbur_1681"/>
<dbReference type="GeneID" id="3998077"/>
<dbReference type="KEGG" id="mbu:Mbur_1681"/>
<dbReference type="HOGENOM" id="CLU_089550_0_0_2"/>
<dbReference type="OrthoDB" id="15415at2157"/>
<dbReference type="UniPathway" id="UPA00253">
    <property type="reaction ID" value="UER00456"/>
</dbReference>
<dbReference type="Proteomes" id="UP000001979">
    <property type="component" value="Chromosome"/>
</dbReference>
<dbReference type="GO" id="GO:0033735">
    <property type="term" value="F:aspartate dehydrogenase activity"/>
    <property type="evidence" value="ECO:0007669"/>
    <property type="project" value="UniProtKB-EC"/>
</dbReference>
<dbReference type="GO" id="GO:0051287">
    <property type="term" value="F:NAD binding"/>
    <property type="evidence" value="ECO:0007669"/>
    <property type="project" value="UniProtKB-UniRule"/>
</dbReference>
<dbReference type="GO" id="GO:0050661">
    <property type="term" value="F:NADP binding"/>
    <property type="evidence" value="ECO:0007669"/>
    <property type="project" value="UniProtKB-UniRule"/>
</dbReference>
<dbReference type="GO" id="GO:0016639">
    <property type="term" value="F:oxidoreductase activity, acting on the CH-NH2 group of donors, NAD or NADP as acceptor"/>
    <property type="evidence" value="ECO:0007669"/>
    <property type="project" value="UniProtKB-UniRule"/>
</dbReference>
<dbReference type="GO" id="GO:0009435">
    <property type="term" value="P:NAD biosynthetic process"/>
    <property type="evidence" value="ECO:0007669"/>
    <property type="project" value="UniProtKB-UniRule"/>
</dbReference>
<dbReference type="Gene3D" id="3.30.360.10">
    <property type="entry name" value="Dihydrodipicolinate Reductase, domain 2"/>
    <property type="match status" value="1"/>
</dbReference>
<dbReference type="Gene3D" id="3.40.50.720">
    <property type="entry name" value="NAD(P)-binding Rossmann-like Domain"/>
    <property type="match status" value="1"/>
</dbReference>
<dbReference type="HAMAP" id="MF_01265">
    <property type="entry name" value="NadX"/>
    <property type="match status" value="1"/>
</dbReference>
<dbReference type="InterPro" id="IPR005106">
    <property type="entry name" value="Asp/hSer_DH_NAD-bd"/>
</dbReference>
<dbReference type="InterPro" id="IPR002811">
    <property type="entry name" value="Asp_DH"/>
</dbReference>
<dbReference type="InterPro" id="IPR022487">
    <property type="entry name" value="Asp_DH_arc"/>
</dbReference>
<dbReference type="InterPro" id="IPR020626">
    <property type="entry name" value="Asp_DH_prok"/>
</dbReference>
<dbReference type="InterPro" id="IPR011182">
    <property type="entry name" value="L-Asp_DH"/>
</dbReference>
<dbReference type="InterPro" id="IPR036291">
    <property type="entry name" value="NAD(P)-bd_dom_sf"/>
</dbReference>
<dbReference type="NCBIfam" id="TIGR03855">
    <property type="entry name" value="NAD_NadX"/>
    <property type="match status" value="1"/>
</dbReference>
<dbReference type="NCBIfam" id="NF009828">
    <property type="entry name" value="PRK13303.1-3"/>
    <property type="match status" value="1"/>
</dbReference>
<dbReference type="NCBIfam" id="NF009829">
    <property type="entry name" value="PRK13303.1-4"/>
    <property type="match status" value="1"/>
</dbReference>
<dbReference type="NCBIfam" id="NF009830">
    <property type="entry name" value="PRK13304.1"/>
    <property type="match status" value="1"/>
</dbReference>
<dbReference type="PANTHER" id="PTHR31873:SF6">
    <property type="entry name" value="ASPARTATE DEHYDROGENASE DOMAIN-CONTAINING PROTEIN"/>
    <property type="match status" value="1"/>
</dbReference>
<dbReference type="PANTHER" id="PTHR31873">
    <property type="entry name" value="L-ASPARTATE DEHYDROGENASE-RELATED"/>
    <property type="match status" value="1"/>
</dbReference>
<dbReference type="Pfam" id="PF01958">
    <property type="entry name" value="Asp_DH_C"/>
    <property type="match status" value="1"/>
</dbReference>
<dbReference type="Pfam" id="PF03447">
    <property type="entry name" value="NAD_binding_3"/>
    <property type="match status" value="1"/>
</dbReference>
<dbReference type="PIRSF" id="PIRSF005227">
    <property type="entry name" value="Asp_dh_NAD_syn"/>
    <property type="match status" value="1"/>
</dbReference>
<dbReference type="SUPFAM" id="SSF55347">
    <property type="entry name" value="Glyceraldehyde-3-phosphate dehydrogenase-like, C-terminal domain"/>
    <property type="match status" value="1"/>
</dbReference>
<dbReference type="SUPFAM" id="SSF51735">
    <property type="entry name" value="NAD(P)-binding Rossmann-fold domains"/>
    <property type="match status" value="1"/>
</dbReference>
<comment type="function">
    <text evidence="1">Specifically catalyzes the NAD or NADP-dependent dehydrogenation of L-aspartate to iminoaspartate.</text>
</comment>
<comment type="catalytic activity">
    <reaction evidence="1">
        <text>L-aspartate + NADP(+) + H2O = oxaloacetate + NH4(+) + NADPH + H(+)</text>
        <dbReference type="Rhea" id="RHEA:11784"/>
        <dbReference type="ChEBI" id="CHEBI:15377"/>
        <dbReference type="ChEBI" id="CHEBI:15378"/>
        <dbReference type="ChEBI" id="CHEBI:16452"/>
        <dbReference type="ChEBI" id="CHEBI:28938"/>
        <dbReference type="ChEBI" id="CHEBI:29991"/>
        <dbReference type="ChEBI" id="CHEBI:57783"/>
        <dbReference type="ChEBI" id="CHEBI:58349"/>
        <dbReference type="EC" id="1.4.1.21"/>
    </reaction>
</comment>
<comment type="catalytic activity">
    <reaction evidence="1">
        <text>L-aspartate + NAD(+) + H2O = oxaloacetate + NH4(+) + NADH + H(+)</text>
        <dbReference type="Rhea" id="RHEA:11788"/>
        <dbReference type="ChEBI" id="CHEBI:15377"/>
        <dbReference type="ChEBI" id="CHEBI:15378"/>
        <dbReference type="ChEBI" id="CHEBI:16452"/>
        <dbReference type="ChEBI" id="CHEBI:28938"/>
        <dbReference type="ChEBI" id="CHEBI:29991"/>
        <dbReference type="ChEBI" id="CHEBI:57540"/>
        <dbReference type="ChEBI" id="CHEBI:57945"/>
        <dbReference type="EC" id="1.4.1.21"/>
    </reaction>
</comment>
<comment type="pathway">
    <text evidence="1">Cofactor biosynthesis; NAD(+) biosynthesis; iminoaspartate from L-aspartate (dehydrogenase route): step 1/1.</text>
</comment>
<comment type="miscellaneous">
    <text evidence="1">The iminoaspartate product is unstable in aqueous solution and can decompose to oxaloacetate and ammonia.</text>
</comment>
<comment type="similarity">
    <text evidence="1">Belongs to the L-aspartate dehydrogenase family.</text>
</comment>
<accession>Q12VF1</accession>
<keyword id="KW-0520">NAD</keyword>
<keyword id="KW-0521">NADP</keyword>
<keyword id="KW-0560">Oxidoreductase</keyword>
<keyword id="KW-0662">Pyridine nucleotide biosynthesis</keyword>
<protein>
    <recommendedName>
        <fullName evidence="1">L-aspartate dehydrogenase</fullName>
        <ecNumber evidence="1">1.4.1.21</ecNumber>
    </recommendedName>
</protein>
<proteinExistence type="inferred from homology"/>
<gene>
    <name evidence="1" type="primary">nadX</name>
    <name type="ordered locus">Mbur_1681</name>
</gene>
<feature type="chain" id="PRO_1000067304" description="L-aspartate dehydrogenase">
    <location>
        <begin position="1"/>
        <end position="271"/>
    </location>
</feature>
<feature type="active site" evidence="1">
    <location>
        <position position="222"/>
    </location>
</feature>
<feature type="binding site" evidence="1">
    <location>
        <position position="124"/>
    </location>
    <ligand>
        <name>NAD(+)</name>
        <dbReference type="ChEBI" id="CHEBI:57540"/>
    </ligand>
</feature>
<feature type="binding site" evidence="1">
    <location>
        <position position="192"/>
    </location>
    <ligand>
        <name>NAD(+)</name>
        <dbReference type="ChEBI" id="CHEBI:57540"/>
    </ligand>
</feature>
<evidence type="ECO:0000255" key="1">
    <source>
        <dbReference type="HAMAP-Rule" id="MF_01265"/>
    </source>
</evidence>
<organism>
    <name type="scientific">Methanococcoides burtonii (strain DSM 6242 / NBRC 107633 / OCM 468 / ACE-M)</name>
    <dbReference type="NCBI Taxonomy" id="259564"/>
    <lineage>
        <taxon>Archaea</taxon>
        <taxon>Methanobacteriati</taxon>
        <taxon>Methanobacteriota</taxon>
        <taxon>Stenosarchaea group</taxon>
        <taxon>Methanomicrobia</taxon>
        <taxon>Methanosarcinales</taxon>
        <taxon>Methanosarcinaceae</taxon>
        <taxon>Methanococcoides</taxon>
    </lineage>
</organism>